<comment type="function">
    <text evidence="1">Regulator of peptidoglycan synthesis that is essential for the function of penicillin-binding protein 1B (PBP1b).</text>
</comment>
<comment type="subunit">
    <text evidence="1">Interacts with PBP1b.</text>
</comment>
<comment type="subcellular location">
    <subcellularLocation>
        <location evidence="1">Cell outer membrane</location>
        <topology evidence="1">Lipid-anchor</topology>
        <orientation evidence="1">Periplasmic side</orientation>
    </subcellularLocation>
</comment>
<comment type="similarity">
    <text evidence="1">Belongs to the LpoB family.</text>
</comment>
<evidence type="ECO:0000255" key="1">
    <source>
        <dbReference type="HAMAP-Rule" id="MF_01889"/>
    </source>
</evidence>
<evidence type="ECO:0000256" key="2">
    <source>
        <dbReference type="SAM" id="MobiDB-lite"/>
    </source>
</evidence>
<gene>
    <name evidence="1" type="primary">lpoB</name>
    <name type="ordered locus">PC1_2490</name>
</gene>
<organism>
    <name type="scientific">Pectobacterium carotovorum subsp. carotovorum (strain PC1)</name>
    <dbReference type="NCBI Taxonomy" id="561230"/>
    <lineage>
        <taxon>Bacteria</taxon>
        <taxon>Pseudomonadati</taxon>
        <taxon>Pseudomonadota</taxon>
        <taxon>Gammaproteobacteria</taxon>
        <taxon>Enterobacterales</taxon>
        <taxon>Pectobacteriaceae</taxon>
        <taxon>Pectobacterium</taxon>
    </lineage>
</organism>
<dbReference type="EMBL" id="CP001657">
    <property type="protein sequence ID" value="ACT13521.1"/>
    <property type="molecule type" value="Genomic_DNA"/>
</dbReference>
<dbReference type="RefSeq" id="WP_015840701.1">
    <property type="nucleotide sequence ID" value="NC_012917.1"/>
</dbReference>
<dbReference type="SMR" id="C6DKS0"/>
<dbReference type="STRING" id="561230.PC1_2490"/>
<dbReference type="GeneID" id="67794488"/>
<dbReference type="KEGG" id="pct:PC1_2490"/>
<dbReference type="eggNOG" id="COG3417">
    <property type="taxonomic scope" value="Bacteria"/>
</dbReference>
<dbReference type="HOGENOM" id="CLU_092328_0_0_6"/>
<dbReference type="OrthoDB" id="6466283at2"/>
<dbReference type="Proteomes" id="UP000002736">
    <property type="component" value="Chromosome"/>
</dbReference>
<dbReference type="GO" id="GO:0031241">
    <property type="term" value="C:periplasmic side of cell outer membrane"/>
    <property type="evidence" value="ECO:0007669"/>
    <property type="project" value="UniProtKB-UniRule"/>
</dbReference>
<dbReference type="GO" id="GO:0030234">
    <property type="term" value="F:enzyme regulator activity"/>
    <property type="evidence" value="ECO:0007669"/>
    <property type="project" value="UniProtKB-UniRule"/>
</dbReference>
<dbReference type="GO" id="GO:0009252">
    <property type="term" value="P:peptidoglycan biosynthetic process"/>
    <property type="evidence" value="ECO:0007669"/>
    <property type="project" value="UniProtKB-UniRule"/>
</dbReference>
<dbReference type="GO" id="GO:0008360">
    <property type="term" value="P:regulation of cell shape"/>
    <property type="evidence" value="ECO:0007669"/>
    <property type="project" value="UniProtKB-KW"/>
</dbReference>
<dbReference type="Gene3D" id="3.40.50.10610">
    <property type="entry name" value="ABC-type transport auxiliary lipoprotein component"/>
    <property type="match status" value="1"/>
</dbReference>
<dbReference type="HAMAP" id="MF_01889">
    <property type="entry name" value="LpoB"/>
    <property type="match status" value="1"/>
</dbReference>
<dbReference type="InterPro" id="IPR014094">
    <property type="entry name" value="LpoB"/>
</dbReference>
<dbReference type="NCBIfam" id="TIGR02722">
    <property type="entry name" value="lp"/>
    <property type="match status" value="1"/>
</dbReference>
<dbReference type="PANTHER" id="PTHR40593">
    <property type="entry name" value="PENICILLIN-BINDING PROTEIN ACTIVATOR LPOB"/>
    <property type="match status" value="1"/>
</dbReference>
<dbReference type="PANTHER" id="PTHR40593:SF1">
    <property type="entry name" value="PENICILLIN-BINDING PROTEIN ACTIVATOR LPOB"/>
    <property type="match status" value="1"/>
</dbReference>
<dbReference type="Pfam" id="PF13036">
    <property type="entry name" value="LpoB"/>
    <property type="match status" value="1"/>
</dbReference>
<dbReference type="PROSITE" id="PS51257">
    <property type="entry name" value="PROKAR_LIPOPROTEIN"/>
    <property type="match status" value="1"/>
</dbReference>
<keyword id="KW-0998">Cell outer membrane</keyword>
<keyword id="KW-0133">Cell shape</keyword>
<keyword id="KW-0449">Lipoprotein</keyword>
<keyword id="KW-0472">Membrane</keyword>
<keyword id="KW-0564">Palmitate</keyword>
<keyword id="KW-0573">Peptidoglycan synthesis</keyword>
<keyword id="KW-0732">Signal</keyword>
<protein>
    <recommendedName>
        <fullName evidence="1">Penicillin-binding protein activator LpoB</fullName>
        <shortName evidence="1">PBP activator LpoB</shortName>
    </recommendedName>
</protein>
<name>LPOB_PECCP</name>
<reference key="1">
    <citation type="submission" date="2009-07" db="EMBL/GenBank/DDBJ databases">
        <title>Complete sequence of Pectobacterium carotovorum subsp. carotovorum PC1.</title>
        <authorList>
            <consortium name="US DOE Joint Genome Institute"/>
            <person name="Lucas S."/>
            <person name="Copeland A."/>
            <person name="Lapidus A."/>
            <person name="Glavina del Rio T."/>
            <person name="Tice H."/>
            <person name="Bruce D."/>
            <person name="Goodwin L."/>
            <person name="Pitluck S."/>
            <person name="Munk A.C."/>
            <person name="Brettin T."/>
            <person name="Detter J.C."/>
            <person name="Han C."/>
            <person name="Tapia R."/>
            <person name="Larimer F."/>
            <person name="Land M."/>
            <person name="Hauser L."/>
            <person name="Kyrpides N."/>
            <person name="Mikhailova N."/>
            <person name="Balakrishnan V."/>
            <person name="Glasner J."/>
            <person name="Perna N.T."/>
        </authorList>
    </citation>
    <scope>NUCLEOTIDE SEQUENCE [LARGE SCALE GENOMIC DNA]</scope>
    <source>
        <strain>PC1</strain>
    </source>
</reference>
<proteinExistence type="inferred from homology"/>
<accession>C6DKS0</accession>
<sequence length="193" mass="20209">MKKYLGVILAALVLTGCPSRPPEPTEPPATIEPVEPQVPTTPTLPPGESVPQPPKIQTLNWEASINPLVAQMLQADGVTPGSILLVDSVKNNTNGSLPIAKATGALYSALSSGKAFTLVPREQLAAAKQTLGLSVDDSLGSRSKAIGLARYVSAQYVLYSDVSGDVKSPQIDMQLMLVQTGEIVWSGNGAVQH</sequence>
<feature type="signal peptide" evidence="1">
    <location>
        <begin position="1"/>
        <end position="16"/>
    </location>
</feature>
<feature type="chain" id="PRO_0000405787" description="Penicillin-binding protein activator LpoB">
    <location>
        <begin position="17"/>
        <end position="193"/>
    </location>
</feature>
<feature type="region of interest" description="Disordered" evidence="2">
    <location>
        <begin position="17"/>
        <end position="55"/>
    </location>
</feature>
<feature type="compositionally biased region" description="Low complexity" evidence="2">
    <location>
        <begin position="28"/>
        <end position="41"/>
    </location>
</feature>
<feature type="lipid moiety-binding region" description="N-palmitoyl cysteine" evidence="1">
    <location>
        <position position="17"/>
    </location>
</feature>
<feature type="lipid moiety-binding region" description="S-diacylglycerol cysteine" evidence="1">
    <location>
        <position position="17"/>
    </location>
</feature>